<gene>
    <name evidence="1" type="primary">rps3ae</name>
    <name type="ordered locus">Tneu_0850</name>
</gene>
<comment type="similarity">
    <text evidence="1">Belongs to the eukaryotic ribosomal protein eS1 family.</text>
</comment>
<dbReference type="EMBL" id="CP001014">
    <property type="protein sequence ID" value="ACB39787.1"/>
    <property type="molecule type" value="Genomic_DNA"/>
</dbReference>
<dbReference type="RefSeq" id="WP_012350207.1">
    <property type="nucleotide sequence ID" value="NC_010525.1"/>
</dbReference>
<dbReference type="SMR" id="B1YDC4"/>
<dbReference type="STRING" id="444157.Tneu_0850"/>
<dbReference type="GeneID" id="6164467"/>
<dbReference type="KEGG" id="tne:Tneu_0850"/>
<dbReference type="eggNOG" id="arCOG04186">
    <property type="taxonomic scope" value="Archaea"/>
</dbReference>
<dbReference type="HOGENOM" id="CLU_062507_1_0_2"/>
<dbReference type="OrthoDB" id="30639at2157"/>
<dbReference type="Proteomes" id="UP000001694">
    <property type="component" value="Chromosome"/>
</dbReference>
<dbReference type="GO" id="GO:1990904">
    <property type="term" value="C:ribonucleoprotein complex"/>
    <property type="evidence" value="ECO:0007669"/>
    <property type="project" value="UniProtKB-KW"/>
</dbReference>
<dbReference type="GO" id="GO:0005840">
    <property type="term" value="C:ribosome"/>
    <property type="evidence" value="ECO:0007669"/>
    <property type="project" value="UniProtKB-KW"/>
</dbReference>
<dbReference type="GO" id="GO:0003735">
    <property type="term" value="F:structural constituent of ribosome"/>
    <property type="evidence" value="ECO:0007669"/>
    <property type="project" value="InterPro"/>
</dbReference>
<dbReference type="GO" id="GO:0006412">
    <property type="term" value="P:translation"/>
    <property type="evidence" value="ECO:0007669"/>
    <property type="project" value="UniProtKB-UniRule"/>
</dbReference>
<dbReference type="HAMAP" id="MF_00359">
    <property type="entry name" value="Ribosomal_eS1"/>
    <property type="match status" value="1"/>
</dbReference>
<dbReference type="InterPro" id="IPR001593">
    <property type="entry name" value="Ribosomal_eS1"/>
</dbReference>
<dbReference type="InterPro" id="IPR030838">
    <property type="entry name" value="Ribosomal_eS1_arc"/>
</dbReference>
<dbReference type="NCBIfam" id="NF003142">
    <property type="entry name" value="PRK04057.1"/>
    <property type="match status" value="1"/>
</dbReference>
<dbReference type="PANTHER" id="PTHR11830">
    <property type="entry name" value="40S RIBOSOMAL PROTEIN S3A"/>
    <property type="match status" value="1"/>
</dbReference>
<dbReference type="Pfam" id="PF01015">
    <property type="entry name" value="Ribosomal_S3Ae"/>
    <property type="match status" value="1"/>
</dbReference>
<dbReference type="SMART" id="SM01397">
    <property type="entry name" value="Ribosomal_S3Ae"/>
    <property type="match status" value="1"/>
</dbReference>
<proteinExistence type="inferred from homology"/>
<evidence type="ECO:0000255" key="1">
    <source>
        <dbReference type="HAMAP-Rule" id="MF_00359"/>
    </source>
</evidence>
<evidence type="ECO:0000305" key="2"/>
<protein>
    <recommendedName>
        <fullName evidence="1">Small ribosomal subunit protein eS1</fullName>
    </recommendedName>
    <alternativeName>
        <fullName evidence="2">30S ribosomal protein S3Ae</fullName>
    </alternativeName>
    <alternativeName>
        <fullName evidence="1">Ribosomal protein S1e</fullName>
    </alternativeName>
</protein>
<name>RS3A_PYRNV</name>
<organism>
    <name type="scientific">Pyrobaculum neutrophilum (strain DSM 2338 / JCM 9278 / NBRC 100436 / V24Sta)</name>
    <name type="common">Thermoproteus neutrophilus</name>
    <dbReference type="NCBI Taxonomy" id="444157"/>
    <lineage>
        <taxon>Archaea</taxon>
        <taxon>Thermoproteota</taxon>
        <taxon>Thermoprotei</taxon>
        <taxon>Thermoproteales</taxon>
        <taxon>Thermoproteaceae</taxon>
        <taxon>Pyrobaculum</taxon>
    </lineage>
</organism>
<reference key="1">
    <citation type="submission" date="2008-03" db="EMBL/GenBank/DDBJ databases">
        <title>Complete sequence of Thermoproteus neutrophilus V24Sta.</title>
        <authorList>
            <consortium name="US DOE Joint Genome Institute"/>
            <person name="Copeland A."/>
            <person name="Lucas S."/>
            <person name="Lapidus A."/>
            <person name="Glavina del Rio T."/>
            <person name="Dalin E."/>
            <person name="Tice H."/>
            <person name="Bruce D."/>
            <person name="Goodwin L."/>
            <person name="Pitluck S."/>
            <person name="Sims D."/>
            <person name="Brettin T."/>
            <person name="Detter J.C."/>
            <person name="Han C."/>
            <person name="Kuske C.R."/>
            <person name="Schmutz J."/>
            <person name="Larimer F."/>
            <person name="Land M."/>
            <person name="Hauser L."/>
            <person name="Kyrpides N."/>
            <person name="Mikhailova N."/>
            <person name="Biddle J.F."/>
            <person name="Zhang Z."/>
            <person name="Fitz-Gibbon S.T."/>
            <person name="Lowe T.M."/>
            <person name="Saltikov C."/>
            <person name="House C.H."/>
            <person name="Richardson P."/>
        </authorList>
    </citation>
    <scope>NUCLEOTIDE SEQUENCE [LARGE SCALE GENOMIC DNA]</scope>
    <source>
        <strain>DSM 2338 / JCM 9278 / NBRC 100436 / V24Sta</strain>
    </source>
</reference>
<keyword id="KW-0687">Ribonucleoprotein</keyword>
<keyword id="KW-0689">Ribosomal protein</keyword>
<feature type="chain" id="PRO_1000120689" description="Small ribosomal subunit protein eS1">
    <location>
        <begin position="1"/>
        <end position="222"/>
    </location>
</feature>
<accession>B1YDC4</accession>
<sequence length="222" mass="24560">MAEKQKAVAKQEKVAISKRDPWALKKWYTVYAPSYLGGVALAEVPAAEAQKLLLRTIEVSLYDITKDISHLPIKLRFQIHRVDGLKAATRFKGLELTRDYVRSLVRKGTSKVSAIVDVKTKDGWVMRISILAVTAHRIGTAQKSAIRKRVAEALSRKASDSDVGQFLKEVLEGSLAAELFVAGKKIAPLRKVEVAKIKVLRYPPEEEQTAVREVAAEEVAAS</sequence>